<gene>
    <name evidence="1" type="primary">slyX</name>
    <name type="ordered locus">ESA_04393</name>
</gene>
<dbReference type="EMBL" id="CP000783">
    <property type="protein sequence ID" value="ABU79572.1"/>
    <property type="molecule type" value="Genomic_DNA"/>
</dbReference>
<dbReference type="RefSeq" id="WP_007778724.1">
    <property type="nucleotide sequence ID" value="NC_009778.1"/>
</dbReference>
<dbReference type="SMR" id="A7ME27"/>
<dbReference type="KEGG" id="esa:ESA_04393"/>
<dbReference type="HOGENOM" id="CLU_180796_4_2_6"/>
<dbReference type="Proteomes" id="UP000000260">
    <property type="component" value="Chromosome"/>
</dbReference>
<dbReference type="Gene3D" id="1.20.5.300">
    <property type="match status" value="1"/>
</dbReference>
<dbReference type="HAMAP" id="MF_00715">
    <property type="entry name" value="SlyX"/>
    <property type="match status" value="1"/>
</dbReference>
<dbReference type="InterPro" id="IPR007236">
    <property type="entry name" value="SlyX"/>
</dbReference>
<dbReference type="NCBIfam" id="NF002750">
    <property type="entry name" value="PRK02793.1"/>
    <property type="match status" value="1"/>
</dbReference>
<dbReference type="PANTHER" id="PTHR36508">
    <property type="entry name" value="PROTEIN SLYX"/>
    <property type="match status" value="1"/>
</dbReference>
<dbReference type="PANTHER" id="PTHR36508:SF1">
    <property type="entry name" value="PROTEIN SLYX"/>
    <property type="match status" value="1"/>
</dbReference>
<dbReference type="Pfam" id="PF04102">
    <property type="entry name" value="SlyX"/>
    <property type="match status" value="1"/>
</dbReference>
<comment type="similarity">
    <text evidence="1">Belongs to the SlyX family.</text>
</comment>
<sequence>MHNESTEHRIAELESRLAFQETTIEDLNAAITKHELELAKMREQLKIMVEKIKASQPSMIASQAEETPPPHY</sequence>
<feature type="chain" id="PRO_1000045714" description="Protein SlyX">
    <location>
        <begin position="1"/>
        <end position="72"/>
    </location>
</feature>
<name>SLYX_CROS8</name>
<keyword id="KW-1185">Reference proteome</keyword>
<protein>
    <recommendedName>
        <fullName evidence="1">Protein SlyX</fullName>
    </recommendedName>
</protein>
<evidence type="ECO:0000255" key="1">
    <source>
        <dbReference type="HAMAP-Rule" id="MF_00715"/>
    </source>
</evidence>
<accession>A7ME27</accession>
<organism>
    <name type="scientific">Cronobacter sakazakii (strain ATCC BAA-894)</name>
    <name type="common">Enterobacter sakazakii</name>
    <dbReference type="NCBI Taxonomy" id="290339"/>
    <lineage>
        <taxon>Bacteria</taxon>
        <taxon>Pseudomonadati</taxon>
        <taxon>Pseudomonadota</taxon>
        <taxon>Gammaproteobacteria</taxon>
        <taxon>Enterobacterales</taxon>
        <taxon>Enterobacteriaceae</taxon>
        <taxon>Cronobacter</taxon>
    </lineage>
</organism>
<reference key="1">
    <citation type="journal article" date="2010" name="PLoS ONE">
        <title>Genome sequence of Cronobacter sakazakii BAA-894 and comparative genomic hybridization analysis with other Cronobacter species.</title>
        <authorList>
            <person name="Kucerova E."/>
            <person name="Clifton S.W."/>
            <person name="Xia X.Q."/>
            <person name="Long F."/>
            <person name="Porwollik S."/>
            <person name="Fulton L."/>
            <person name="Fronick C."/>
            <person name="Minx P."/>
            <person name="Kyung K."/>
            <person name="Warren W."/>
            <person name="Fulton R."/>
            <person name="Feng D."/>
            <person name="Wollam A."/>
            <person name="Shah N."/>
            <person name="Bhonagiri V."/>
            <person name="Nash W.E."/>
            <person name="Hallsworth-Pepin K."/>
            <person name="Wilson R.K."/>
            <person name="McClelland M."/>
            <person name="Forsythe S.J."/>
        </authorList>
    </citation>
    <scope>NUCLEOTIDE SEQUENCE [LARGE SCALE GENOMIC DNA]</scope>
    <source>
        <strain>ATCC BAA-894</strain>
    </source>
</reference>
<proteinExistence type="inferred from homology"/>